<sequence>MMNYEDAKLRGQAVAILYQIGAIKFGKHILASGEETPLYVDMRLVISSPEVLQTVATLIWRLRPSFNSSLLCGVPYTALTLATSISLKYNIPMVLRRKELQNVDPSDAIKVEGLFTPGQTCLVINDMVSSGKSIIETAVALEENGLVVREALVFLDRRKEACQPLGPQGIKVSSVFTVPTLIKALIAYGKLSSGDLTLANKISEILEIES</sequence>
<feature type="chain" id="PRO_0000110686" description="Orotate phosphoribosyltransferase">
    <location>
        <begin position="1"/>
        <end position="210"/>
    </location>
</feature>
<feature type="binding site" evidence="1">
    <location>
        <position position="97"/>
    </location>
    <ligand>
        <name>5-phospho-alpha-D-ribose 1-diphosphate</name>
        <dbReference type="ChEBI" id="CHEBI:58017"/>
        <note>ligand shared between dimeric partners</note>
    </ligand>
</feature>
<feature type="binding site" description="in other chain" evidence="1">
    <location>
        <position position="98"/>
    </location>
    <ligand>
        <name>5-phospho-alpha-D-ribose 1-diphosphate</name>
        <dbReference type="ChEBI" id="CHEBI:58017"/>
        <note>ligand shared between dimeric partners</note>
    </ligand>
</feature>
<feature type="binding site" description="in other chain" evidence="1">
    <location>
        <begin position="125"/>
        <end position="133"/>
    </location>
    <ligand>
        <name>5-phospho-alpha-D-ribose 1-diphosphate</name>
        <dbReference type="ChEBI" id="CHEBI:58017"/>
        <note>ligand shared between dimeric partners</note>
    </ligand>
</feature>
<feature type="binding site" evidence="1">
    <location>
        <position position="129"/>
    </location>
    <ligand>
        <name>orotate</name>
        <dbReference type="ChEBI" id="CHEBI:30839"/>
    </ligand>
</feature>
<feature type="binding site" evidence="1">
    <location>
        <position position="157"/>
    </location>
    <ligand>
        <name>orotate</name>
        <dbReference type="ChEBI" id="CHEBI:30839"/>
    </ligand>
</feature>
<feature type="sequence conflict" description="In Ref. 3; BAA98815." evidence="2" ref="3">
    <original>R</original>
    <variation>Q</variation>
    <location>
        <position position="61"/>
    </location>
</feature>
<dbReference type="EC" id="2.4.2.10" evidence="1"/>
<dbReference type="EMBL" id="AE001363">
    <property type="protein sequence ID" value="AAD18747.1"/>
    <property type="molecule type" value="Genomic_DNA"/>
</dbReference>
<dbReference type="EMBL" id="AE002161">
    <property type="protein sequence ID" value="AAF73630.1"/>
    <property type="molecule type" value="Genomic_DNA"/>
</dbReference>
<dbReference type="EMBL" id="BA000008">
    <property type="protein sequence ID" value="BAA98815.1"/>
    <property type="molecule type" value="Genomic_DNA"/>
</dbReference>
<dbReference type="EMBL" id="AE009440">
    <property type="protein sequence ID" value="AAP98561.1"/>
    <property type="molecule type" value="Genomic_DNA"/>
</dbReference>
<dbReference type="PIR" id="B72058">
    <property type="entry name" value="B72058"/>
</dbReference>
<dbReference type="PIR" id="E86566">
    <property type="entry name" value="E86566"/>
</dbReference>
<dbReference type="RefSeq" id="NP_224804.1">
    <property type="nucleotide sequence ID" value="NC_000922.1"/>
</dbReference>
<dbReference type="RefSeq" id="WP_010883246.1">
    <property type="nucleotide sequence ID" value="NZ_LN847257.1"/>
</dbReference>
<dbReference type="SMR" id="Q9Z7U6"/>
<dbReference type="STRING" id="406984.CPK_ORF00007"/>
<dbReference type="GeneID" id="45050656"/>
<dbReference type="KEGG" id="cpa:CP_0139"/>
<dbReference type="KEGG" id="cpj:CPj0608"/>
<dbReference type="KEGG" id="cpn:CPn_0608"/>
<dbReference type="KEGG" id="cpt:CpB0632"/>
<dbReference type="PATRIC" id="fig|115713.3.peg.677"/>
<dbReference type="eggNOG" id="COG0461">
    <property type="taxonomic scope" value="Bacteria"/>
</dbReference>
<dbReference type="HOGENOM" id="CLU_074878_2_0_0"/>
<dbReference type="OrthoDB" id="9802134at2"/>
<dbReference type="UniPathway" id="UPA00070">
    <property type="reaction ID" value="UER00119"/>
</dbReference>
<dbReference type="Proteomes" id="UP000000583">
    <property type="component" value="Chromosome"/>
</dbReference>
<dbReference type="Proteomes" id="UP000000801">
    <property type="component" value="Chromosome"/>
</dbReference>
<dbReference type="GO" id="GO:0000287">
    <property type="term" value="F:magnesium ion binding"/>
    <property type="evidence" value="ECO:0007669"/>
    <property type="project" value="UniProtKB-UniRule"/>
</dbReference>
<dbReference type="GO" id="GO:0004588">
    <property type="term" value="F:orotate phosphoribosyltransferase activity"/>
    <property type="evidence" value="ECO:0007669"/>
    <property type="project" value="UniProtKB-UniRule"/>
</dbReference>
<dbReference type="GO" id="GO:0004590">
    <property type="term" value="F:orotidine-5'-phosphate decarboxylase activity"/>
    <property type="evidence" value="ECO:0007669"/>
    <property type="project" value="TreeGrafter"/>
</dbReference>
<dbReference type="GO" id="GO:0044205">
    <property type="term" value="P:'de novo' UMP biosynthetic process"/>
    <property type="evidence" value="ECO:0007669"/>
    <property type="project" value="UniProtKB-UniRule"/>
</dbReference>
<dbReference type="GO" id="GO:0019856">
    <property type="term" value="P:pyrimidine nucleobase biosynthetic process"/>
    <property type="evidence" value="ECO:0007669"/>
    <property type="project" value="TreeGrafter"/>
</dbReference>
<dbReference type="CDD" id="cd06223">
    <property type="entry name" value="PRTases_typeI"/>
    <property type="match status" value="1"/>
</dbReference>
<dbReference type="Gene3D" id="3.40.50.2020">
    <property type="match status" value="1"/>
</dbReference>
<dbReference type="HAMAP" id="MF_01208">
    <property type="entry name" value="PyrE"/>
    <property type="match status" value="1"/>
</dbReference>
<dbReference type="InterPro" id="IPR023031">
    <property type="entry name" value="OPRT"/>
</dbReference>
<dbReference type="InterPro" id="IPR000836">
    <property type="entry name" value="PRibTrfase_dom"/>
</dbReference>
<dbReference type="InterPro" id="IPR029057">
    <property type="entry name" value="PRTase-like"/>
</dbReference>
<dbReference type="NCBIfam" id="NF010382">
    <property type="entry name" value="PRK13809.1"/>
    <property type="match status" value="1"/>
</dbReference>
<dbReference type="PANTHER" id="PTHR19278">
    <property type="entry name" value="OROTATE PHOSPHORIBOSYLTRANSFERASE"/>
    <property type="match status" value="1"/>
</dbReference>
<dbReference type="PANTHER" id="PTHR19278:SF9">
    <property type="entry name" value="URIDINE 5'-MONOPHOSPHATE SYNTHASE"/>
    <property type="match status" value="1"/>
</dbReference>
<dbReference type="Pfam" id="PF00156">
    <property type="entry name" value="Pribosyltran"/>
    <property type="match status" value="1"/>
</dbReference>
<dbReference type="SUPFAM" id="SSF53271">
    <property type="entry name" value="PRTase-like"/>
    <property type="match status" value="1"/>
</dbReference>
<evidence type="ECO:0000255" key="1">
    <source>
        <dbReference type="HAMAP-Rule" id="MF_01208"/>
    </source>
</evidence>
<evidence type="ECO:0000305" key="2"/>
<gene>
    <name evidence="1" type="primary">pyrE</name>
    <name type="ordered locus">CPn_0608</name>
    <name type="ordered locus">CP_0139</name>
    <name type="ordered locus">CPj0608</name>
    <name type="ordered locus">CpB0632</name>
</gene>
<protein>
    <recommendedName>
        <fullName evidence="1">Orotate phosphoribosyltransferase</fullName>
        <shortName evidence="1">OPRT</shortName>
        <shortName evidence="1">OPRTase</shortName>
        <ecNumber evidence="1">2.4.2.10</ecNumber>
    </recommendedName>
</protein>
<proteinExistence type="inferred from homology"/>
<reference key="1">
    <citation type="journal article" date="1999" name="Nat. Genet.">
        <title>Comparative genomes of Chlamydia pneumoniae and C. trachomatis.</title>
        <authorList>
            <person name="Kalman S."/>
            <person name="Mitchell W.P."/>
            <person name="Marathe R."/>
            <person name="Lammel C.J."/>
            <person name="Fan J."/>
            <person name="Hyman R.W."/>
            <person name="Olinger L."/>
            <person name="Grimwood J."/>
            <person name="Davis R.W."/>
            <person name="Stephens R.S."/>
        </authorList>
    </citation>
    <scope>NUCLEOTIDE SEQUENCE [LARGE SCALE GENOMIC DNA]</scope>
    <source>
        <strain>CWL029</strain>
    </source>
</reference>
<reference key="2">
    <citation type="journal article" date="2000" name="Nucleic Acids Res.">
        <title>Genome sequences of Chlamydia trachomatis MoPn and Chlamydia pneumoniae AR39.</title>
        <authorList>
            <person name="Read T.D."/>
            <person name="Brunham R.C."/>
            <person name="Shen C."/>
            <person name="Gill S.R."/>
            <person name="Heidelberg J.F."/>
            <person name="White O."/>
            <person name="Hickey E.K."/>
            <person name="Peterson J.D."/>
            <person name="Utterback T.R."/>
            <person name="Berry K.J."/>
            <person name="Bass S."/>
            <person name="Linher K.D."/>
            <person name="Weidman J.F."/>
            <person name="Khouri H.M."/>
            <person name="Craven B."/>
            <person name="Bowman C."/>
            <person name="Dodson R.J."/>
            <person name="Gwinn M.L."/>
            <person name="Nelson W.C."/>
            <person name="DeBoy R.T."/>
            <person name="Kolonay J.F."/>
            <person name="McClarty G."/>
            <person name="Salzberg S.L."/>
            <person name="Eisen J.A."/>
            <person name="Fraser C.M."/>
        </authorList>
    </citation>
    <scope>NUCLEOTIDE SEQUENCE [LARGE SCALE GENOMIC DNA]</scope>
    <source>
        <strain>AR39</strain>
    </source>
</reference>
<reference key="3">
    <citation type="journal article" date="2000" name="Nucleic Acids Res.">
        <title>Comparison of whole genome sequences of Chlamydia pneumoniae J138 from Japan and CWL029 from USA.</title>
        <authorList>
            <person name="Shirai M."/>
            <person name="Hirakawa H."/>
            <person name="Kimoto M."/>
            <person name="Tabuchi M."/>
            <person name="Kishi F."/>
            <person name="Ouchi K."/>
            <person name="Shiba T."/>
            <person name="Ishii K."/>
            <person name="Hattori M."/>
            <person name="Kuhara S."/>
            <person name="Nakazawa T."/>
        </authorList>
    </citation>
    <scope>NUCLEOTIDE SEQUENCE [LARGE SCALE GENOMIC DNA]</scope>
    <source>
        <strain>J138</strain>
    </source>
</reference>
<reference key="4">
    <citation type="submission" date="2002-05" db="EMBL/GenBank/DDBJ databases">
        <title>The genome sequence of Chlamydia pneumoniae TW183 and comparison with other Chlamydia strains based on whole genome sequence analysis.</title>
        <authorList>
            <person name="Geng M.M."/>
            <person name="Schuhmacher A."/>
            <person name="Muehldorfer I."/>
            <person name="Bensch K.W."/>
            <person name="Schaefer K.P."/>
            <person name="Schneider S."/>
            <person name="Pohl T."/>
            <person name="Essig A."/>
            <person name="Marre R."/>
            <person name="Melchers K."/>
        </authorList>
    </citation>
    <scope>NUCLEOTIDE SEQUENCE [LARGE SCALE GENOMIC DNA]</scope>
    <source>
        <strain>TW-183</strain>
    </source>
</reference>
<keyword id="KW-0328">Glycosyltransferase</keyword>
<keyword id="KW-0460">Magnesium</keyword>
<keyword id="KW-0665">Pyrimidine biosynthesis</keyword>
<keyword id="KW-0808">Transferase</keyword>
<name>PYRE_CHLPN</name>
<accession>Q9Z7U6</accession>
<accession>Q9JSD0</accession>
<comment type="function">
    <text evidence="1">Catalyzes the transfer of a ribosyl phosphate group from 5-phosphoribose 1-diphosphate to orotate, leading to the formation of orotidine monophosphate (OMP).</text>
</comment>
<comment type="catalytic activity">
    <reaction evidence="1">
        <text>orotidine 5'-phosphate + diphosphate = orotate + 5-phospho-alpha-D-ribose 1-diphosphate</text>
        <dbReference type="Rhea" id="RHEA:10380"/>
        <dbReference type="ChEBI" id="CHEBI:30839"/>
        <dbReference type="ChEBI" id="CHEBI:33019"/>
        <dbReference type="ChEBI" id="CHEBI:57538"/>
        <dbReference type="ChEBI" id="CHEBI:58017"/>
        <dbReference type="EC" id="2.4.2.10"/>
    </reaction>
</comment>
<comment type="cofactor">
    <cofactor evidence="1">
        <name>Mg(2+)</name>
        <dbReference type="ChEBI" id="CHEBI:18420"/>
    </cofactor>
</comment>
<comment type="pathway">
    <text evidence="1">Pyrimidine metabolism; UMP biosynthesis via de novo pathway; UMP from orotate: step 1/2.</text>
</comment>
<comment type="subunit">
    <text evidence="1">Homodimer.</text>
</comment>
<comment type="similarity">
    <text evidence="1">Belongs to the purine/pyrimidine phosphoribosyltransferase family. PyrE subfamily.</text>
</comment>
<comment type="caution">
    <text evidence="2">Gln-101 is present instead of the conserved Lys which is expected to be an active site residue.</text>
</comment>
<organism>
    <name type="scientific">Chlamydia pneumoniae</name>
    <name type="common">Chlamydophila pneumoniae</name>
    <dbReference type="NCBI Taxonomy" id="83558"/>
    <lineage>
        <taxon>Bacteria</taxon>
        <taxon>Pseudomonadati</taxon>
        <taxon>Chlamydiota</taxon>
        <taxon>Chlamydiia</taxon>
        <taxon>Chlamydiales</taxon>
        <taxon>Chlamydiaceae</taxon>
        <taxon>Chlamydia/Chlamydophila group</taxon>
        <taxon>Chlamydia</taxon>
    </lineage>
</organism>